<accession>Q2FDE7</accession>
<proteinExistence type="inferred from homology"/>
<feature type="chain" id="PRO_1000021470" description="Ribonuclease P protein component">
    <location>
        <begin position="1"/>
        <end position="117"/>
    </location>
</feature>
<gene>
    <name evidence="1" type="primary">rnpA</name>
    <name type="ordered locus">SAUSA300_2647</name>
</gene>
<protein>
    <recommendedName>
        <fullName evidence="1">Ribonuclease P protein component</fullName>
        <shortName evidence="1">RNase P protein</shortName>
        <shortName evidence="1">RNaseP protein</shortName>
        <ecNumber evidence="1">3.1.26.5</ecNumber>
    </recommendedName>
    <alternativeName>
        <fullName evidence="1">Protein C5</fullName>
    </alternativeName>
</protein>
<dbReference type="EC" id="3.1.26.5" evidence="1"/>
<dbReference type="EMBL" id="CP000255">
    <property type="protein sequence ID" value="ABD22010.1"/>
    <property type="molecule type" value="Genomic_DNA"/>
</dbReference>
<dbReference type="RefSeq" id="WP_001789343.1">
    <property type="nucleotide sequence ID" value="NZ_CP027476.1"/>
</dbReference>
<dbReference type="SMR" id="Q2FDE7"/>
<dbReference type="KEGG" id="saa:SAUSA300_2647"/>
<dbReference type="HOGENOM" id="CLU_117179_9_1_9"/>
<dbReference type="OMA" id="PEQKHFR"/>
<dbReference type="Proteomes" id="UP000001939">
    <property type="component" value="Chromosome"/>
</dbReference>
<dbReference type="GO" id="GO:0030677">
    <property type="term" value="C:ribonuclease P complex"/>
    <property type="evidence" value="ECO:0007669"/>
    <property type="project" value="TreeGrafter"/>
</dbReference>
<dbReference type="GO" id="GO:0042781">
    <property type="term" value="F:3'-tRNA processing endoribonuclease activity"/>
    <property type="evidence" value="ECO:0007669"/>
    <property type="project" value="TreeGrafter"/>
</dbReference>
<dbReference type="GO" id="GO:0004526">
    <property type="term" value="F:ribonuclease P activity"/>
    <property type="evidence" value="ECO:0007669"/>
    <property type="project" value="UniProtKB-UniRule"/>
</dbReference>
<dbReference type="GO" id="GO:0000049">
    <property type="term" value="F:tRNA binding"/>
    <property type="evidence" value="ECO:0007669"/>
    <property type="project" value="UniProtKB-UniRule"/>
</dbReference>
<dbReference type="GO" id="GO:0001682">
    <property type="term" value="P:tRNA 5'-leader removal"/>
    <property type="evidence" value="ECO:0007669"/>
    <property type="project" value="UniProtKB-UniRule"/>
</dbReference>
<dbReference type="FunFam" id="3.30.230.10:FF:000021">
    <property type="entry name" value="Ribonuclease P protein component"/>
    <property type="match status" value="1"/>
</dbReference>
<dbReference type="Gene3D" id="3.30.230.10">
    <property type="match status" value="1"/>
</dbReference>
<dbReference type="HAMAP" id="MF_00227">
    <property type="entry name" value="RNase_P"/>
    <property type="match status" value="1"/>
</dbReference>
<dbReference type="InterPro" id="IPR020568">
    <property type="entry name" value="Ribosomal_Su5_D2-typ_SF"/>
</dbReference>
<dbReference type="InterPro" id="IPR014721">
    <property type="entry name" value="Ribsml_uS5_D2-typ_fold_subgr"/>
</dbReference>
<dbReference type="InterPro" id="IPR000100">
    <property type="entry name" value="RNase_P"/>
</dbReference>
<dbReference type="InterPro" id="IPR020539">
    <property type="entry name" value="RNase_P_CS"/>
</dbReference>
<dbReference type="NCBIfam" id="TIGR00188">
    <property type="entry name" value="rnpA"/>
    <property type="match status" value="1"/>
</dbReference>
<dbReference type="PANTHER" id="PTHR33992">
    <property type="entry name" value="RIBONUCLEASE P PROTEIN COMPONENT"/>
    <property type="match status" value="1"/>
</dbReference>
<dbReference type="PANTHER" id="PTHR33992:SF1">
    <property type="entry name" value="RIBONUCLEASE P PROTEIN COMPONENT"/>
    <property type="match status" value="1"/>
</dbReference>
<dbReference type="Pfam" id="PF00825">
    <property type="entry name" value="Ribonuclease_P"/>
    <property type="match status" value="1"/>
</dbReference>
<dbReference type="SUPFAM" id="SSF54211">
    <property type="entry name" value="Ribosomal protein S5 domain 2-like"/>
    <property type="match status" value="1"/>
</dbReference>
<dbReference type="PROSITE" id="PS00648">
    <property type="entry name" value="RIBONUCLEASE_P"/>
    <property type="match status" value="1"/>
</dbReference>
<evidence type="ECO:0000255" key="1">
    <source>
        <dbReference type="HAMAP-Rule" id="MF_00227"/>
    </source>
</evidence>
<sequence>MLLEKAYRIKKNADFQRIYKKGHSVANRQFVVYTCNNKEIDHFRLGISVSKKLGNAVLRNKIKRAIRENFKVHKSHILAKDIIVIARQPAKDMTTLQIQNSLEHVLKIAKVFNKKIK</sequence>
<name>RNPA_STAA3</name>
<comment type="function">
    <text evidence="1">RNaseP catalyzes the removal of the 5'-leader sequence from pre-tRNA to produce the mature 5'-terminus. It can also cleave other RNA substrates such as 4.5S RNA. The protein component plays an auxiliary but essential role in vivo by binding to the 5'-leader sequence and broadening the substrate specificity of the ribozyme.</text>
</comment>
<comment type="catalytic activity">
    <reaction evidence="1">
        <text>Endonucleolytic cleavage of RNA, removing 5'-extranucleotides from tRNA precursor.</text>
        <dbReference type="EC" id="3.1.26.5"/>
    </reaction>
</comment>
<comment type="subunit">
    <text evidence="1">Consists of a catalytic RNA component (M1 or rnpB) and a protein subunit.</text>
</comment>
<comment type="similarity">
    <text evidence="1">Belongs to the RnpA family.</text>
</comment>
<organism>
    <name type="scientific">Staphylococcus aureus (strain USA300)</name>
    <dbReference type="NCBI Taxonomy" id="367830"/>
    <lineage>
        <taxon>Bacteria</taxon>
        <taxon>Bacillati</taxon>
        <taxon>Bacillota</taxon>
        <taxon>Bacilli</taxon>
        <taxon>Bacillales</taxon>
        <taxon>Staphylococcaceae</taxon>
        <taxon>Staphylococcus</taxon>
    </lineage>
</organism>
<reference key="1">
    <citation type="journal article" date="2006" name="Lancet">
        <title>Complete genome sequence of USA300, an epidemic clone of community-acquired meticillin-resistant Staphylococcus aureus.</title>
        <authorList>
            <person name="Diep B.A."/>
            <person name="Gill S.R."/>
            <person name="Chang R.F."/>
            <person name="Phan T.H."/>
            <person name="Chen J.H."/>
            <person name="Davidson M.G."/>
            <person name="Lin F."/>
            <person name="Lin J."/>
            <person name="Carleton H.A."/>
            <person name="Mongodin E.F."/>
            <person name="Sensabaugh G.F."/>
            <person name="Perdreau-Remington F."/>
        </authorList>
    </citation>
    <scope>NUCLEOTIDE SEQUENCE [LARGE SCALE GENOMIC DNA]</scope>
    <source>
        <strain>USA300</strain>
    </source>
</reference>
<keyword id="KW-0255">Endonuclease</keyword>
<keyword id="KW-0378">Hydrolase</keyword>
<keyword id="KW-0540">Nuclease</keyword>
<keyword id="KW-0694">RNA-binding</keyword>
<keyword id="KW-0819">tRNA processing</keyword>